<gene>
    <name type="primary">PSBT</name>
    <name type="ordered locus">At3g21055</name>
    <name type="ORF">MSA6.9</name>
</gene>
<accession>Q39195</accession>
<accession>Q41925</accession>
<accession>Q9LJC7</accession>
<feature type="transit peptide" description="Chloroplast" evidence="1">
    <location>
        <begin position="1"/>
        <end position="75"/>
    </location>
</feature>
<feature type="chain" id="PRO_0000029367" description="Photosystem II 5 kDa protein, chloroplastic">
    <location>
        <begin position="76"/>
        <end position="103"/>
    </location>
</feature>
<feature type="sequence conflict" description="In Ref. 6; CAA79048." evidence="2" ref="6">
    <original>A</original>
    <variation>G</variation>
    <location>
        <position position="60"/>
    </location>
</feature>
<feature type="sequence conflict" description="In Ref. 1; CAA66701." evidence="2" ref="1">
    <original>P</original>
    <variation>R</variation>
    <location>
        <position position="96"/>
    </location>
</feature>
<feature type="strand" evidence="3">
    <location>
        <begin position="81"/>
        <end position="83"/>
    </location>
</feature>
<feature type="helix" evidence="3">
    <location>
        <begin position="84"/>
        <end position="87"/>
    </location>
</feature>
<feature type="helix" evidence="3">
    <location>
        <begin position="89"/>
        <end position="94"/>
    </location>
</feature>
<feature type="helix" evidence="3">
    <location>
        <begin position="99"/>
        <end position="102"/>
    </location>
</feature>
<organism>
    <name type="scientific">Arabidopsis thaliana</name>
    <name type="common">Mouse-ear cress</name>
    <dbReference type="NCBI Taxonomy" id="3702"/>
    <lineage>
        <taxon>Eukaryota</taxon>
        <taxon>Viridiplantae</taxon>
        <taxon>Streptophyta</taxon>
        <taxon>Embryophyta</taxon>
        <taxon>Tracheophyta</taxon>
        <taxon>Spermatophyta</taxon>
        <taxon>Magnoliopsida</taxon>
        <taxon>eudicotyledons</taxon>
        <taxon>Gunneridae</taxon>
        <taxon>Pentapetalae</taxon>
        <taxon>rosids</taxon>
        <taxon>malvids</taxon>
        <taxon>Brassicales</taxon>
        <taxon>Brassicaceae</taxon>
        <taxon>Camelineae</taxon>
        <taxon>Arabidopsis</taxon>
    </lineage>
</organism>
<reference key="1">
    <citation type="submission" date="1996-06" db="EMBL/GenBank/DDBJ databases">
        <authorList>
            <person name="Kusnetsov V.V."/>
            <person name="Oelmueller R."/>
        </authorList>
    </citation>
    <scope>NUCLEOTIDE SEQUENCE</scope>
    <source>
        <strain>cv. Columbia</strain>
        <tissue>Seedling</tissue>
    </source>
</reference>
<reference key="2">
    <citation type="journal article" date="2000" name="DNA Res.">
        <title>Structural analysis of Arabidopsis thaliana chromosome 3. II. Sequence features of the 4,251,695 bp regions covered by 90 P1, TAC and BAC clones.</title>
        <authorList>
            <person name="Kaneko T."/>
            <person name="Katoh T."/>
            <person name="Sato S."/>
            <person name="Nakamura Y."/>
            <person name="Asamizu E."/>
            <person name="Tabata S."/>
        </authorList>
    </citation>
    <scope>NUCLEOTIDE SEQUENCE [LARGE SCALE GENOMIC DNA]</scope>
    <source>
        <strain>cv. Columbia</strain>
    </source>
</reference>
<reference key="3">
    <citation type="journal article" date="2017" name="Plant J.">
        <title>Araport11: a complete reannotation of the Arabidopsis thaliana reference genome.</title>
        <authorList>
            <person name="Cheng C.Y."/>
            <person name="Krishnakumar V."/>
            <person name="Chan A.P."/>
            <person name="Thibaud-Nissen F."/>
            <person name="Schobel S."/>
            <person name="Town C.D."/>
        </authorList>
    </citation>
    <scope>GENOME REANNOTATION</scope>
    <source>
        <strain>cv. Columbia</strain>
    </source>
</reference>
<reference key="4">
    <citation type="journal article" date="2003" name="Science">
        <title>Empirical analysis of transcriptional activity in the Arabidopsis genome.</title>
        <authorList>
            <person name="Yamada K."/>
            <person name="Lim J."/>
            <person name="Dale J.M."/>
            <person name="Chen H."/>
            <person name="Shinn P."/>
            <person name="Palm C.J."/>
            <person name="Southwick A.M."/>
            <person name="Wu H.C."/>
            <person name="Kim C.J."/>
            <person name="Nguyen M."/>
            <person name="Pham P.K."/>
            <person name="Cheuk R.F."/>
            <person name="Karlin-Newmann G."/>
            <person name="Liu S.X."/>
            <person name="Lam B."/>
            <person name="Sakano H."/>
            <person name="Wu T."/>
            <person name="Yu G."/>
            <person name="Miranda M."/>
            <person name="Quach H.L."/>
            <person name="Tripp M."/>
            <person name="Chang C.H."/>
            <person name="Lee J.M."/>
            <person name="Toriumi M.J."/>
            <person name="Chan M.M."/>
            <person name="Tang C.C."/>
            <person name="Onodera C.S."/>
            <person name="Deng J.M."/>
            <person name="Akiyama K."/>
            <person name="Ansari Y."/>
            <person name="Arakawa T."/>
            <person name="Banh J."/>
            <person name="Banno F."/>
            <person name="Bowser L."/>
            <person name="Brooks S.Y."/>
            <person name="Carninci P."/>
            <person name="Chao Q."/>
            <person name="Choy N."/>
            <person name="Enju A."/>
            <person name="Goldsmith A.D."/>
            <person name="Gurjal M."/>
            <person name="Hansen N.F."/>
            <person name="Hayashizaki Y."/>
            <person name="Johnson-Hopson C."/>
            <person name="Hsuan V.W."/>
            <person name="Iida K."/>
            <person name="Karnes M."/>
            <person name="Khan S."/>
            <person name="Koesema E."/>
            <person name="Ishida J."/>
            <person name="Jiang P.X."/>
            <person name="Jones T."/>
            <person name="Kawai J."/>
            <person name="Kamiya A."/>
            <person name="Meyers C."/>
            <person name="Nakajima M."/>
            <person name="Narusaka M."/>
            <person name="Seki M."/>
            <person name="Sakurai T."/>
            <person name="Satou M."/>
            <person name="Tamse R."/>
            <person name="Vaysberg M."/>
            <person name="Wallender E.K."/>
            <person name="Wong C."/>
            <person name="Yamamura Y."/>
            <person name="Yuan S."/>
            <person name="Shinozaki K."/>
            <person name="Davis R.W."/>
            <person name="Theologis A."/>
            <person name="Ecker J.R."/>
        </authorList>
    </citation>
    <scope>NUCLEOTIDE SEQUENCE [LARGE SCALE MRNA]</scope>
    <source>
        <strain>cv. Columbia</strain>
    </source>
</reference>
<reference key="5">
    <citation type="submission" date="2002-03" db="EMBL/GenBank/DDBJ databases">
        <title>Full-length cDNA from Arabidopsis thaliana.</title>
        <authorList>
            <person name="Brover V.V."/>
            <person name="Troukhan M.E."/>
            <person name="Alexandrov N.A."/>
            <person name="Lu Y.-P."/>
            <person name="Flavell R.B."/>
            <person name="Feldmann K.A."/>
        </authorList>
    </citation>
    <scope>NUCLEOTIDE SEQUENCE [LARGE SCALE MRNA]</scope>
</reference>
<reference key="6">
    <citation type="journal article" date="1993" name="Plant J.">
        <title>An inventory of 1152 expressed sequence tags obtained by partial sequencing of cDNAs from Arabidopsis thaliana.</title>
        <authorList>
            <person name="Hoefte H."/>
            <person name="Desprez T."/>
            <person name="Amselem J."/>
            <person name="Chiapello H."/>
            <person name="Rouze P."/>
            <person name="Caboche M."/>
            <person name="Moisan A."/>
            <person name="Jourjon M.-F."/>
            <person name="Charpenteau J.-L."/>
            <person name="Berthomieu P."/>
            <person name="Guerrier D."/>
            <person name="Giraudat J."/>
            <person name="Quigley F."/>
            <person name="Thomas F."/>
            <person name="Yu D.-Y."/>
            <person name="Mache R."/>
            <person name="Raynal M."/>
            <person name="Cooke R."/>
            <person name="Grellet F."/>
            <person name="Delseny M."/>
            <person name="Parmentier Y."/>
            <person name="de Marcillac G."/>
            <person name="Gigot C."/>
            <person name="Fleck J."/>
            <person name="Philipps G."/>
            <person name="Axelos M."/>
            <person name="Bardet C."/>
            <person name="Tremousaygue D."/>
            <person name="Lescure B."/>
        </authorList>
    </citation>
    <scope>NUCLEOTIDE SEQUENCE [LARGE SCALE MRNA]</scope>
    <source>
        <strain>cv. Columbia</strain>
        <tissue>Green siliques</tissue>
    </source>
</reference>
<comment type="function">
    <text>May be a component of the oxygen-evolving complex.</text>
</comment>
<comment type="subcellular location">
    <subcellularLocation>
        <location evidence="1">Plastid</location>
        <location evidence="1">Chloroplast thylakoid membrane</location>
    </subcellularLocation>
    <text evidence="1">Associated with the photosystem II complex.</text>
</comment>
<comment type="PTM">
    <text evidence="1">The maturation of the PSII-T precursor to its final form occurs through a two step process. First, a stromal intermediate is formed, which, upon translocation into the thylakoid membrane, is processed to the mature protein (By similarity).</text>
</comment>
<name>PST2_ARATH</name>
<sequence>MASMTMTATFFPAVAKVPSATGGRRLSVVRASTSDNTPSLEVKEQSSTTMRRDLMFTAAAAAVCSLAKVAMAEEEEPKRGTEAAKKKYAQVCVTMPTAKICRY</sequence>
<dbReference type="EMBL" id="X98078">
    <property type="protein sequence ID" value="CAA66701.1"/>
    <property type="molecule type" value="mRNA"/>
</dbReference>
<dbReference type="EMBL" id="AP000604">
    <property type="protein sequence ID" value="BAB01448.1"/>
    <property type="molecule type" value="Genomic_DNA"/>
</dbReference>
<dbReference type="EMBL" id="CP002686">
    <property type="protein sequence ID" value="AEE76454.1"/>
    <property type="molecule type" value="Genomic_DNA"/>
</dbReference>
<dbReference type="EMBL" id="AY093364">
    <property type="protein sequence ID" value="AAM13363.1"/>
    <property type="molecule type" value="mRNA"/>
</dbReference>
<dbReference type="EMBL" id="AF326859">
    <property type="protein sequence ID" value="AAG41441.1"/>
    <property type="molecule type" value="mRNA"/>
</dbReference>
<dbReference type="EMBL" id="AF324686">
    <property type="protein sequence ID" value="AAG40037.1"/>
    <property type="molecule type" value="mRNA"/>
</dbReference>
<dbReference type="EMBL" id="AF339682">
    <property type="protein sequence ID" value="AAK00364.1"/>
    <property type="molecule type" value="mRNA"/>
</dbReference>
<dbReference type="EMBL" id="AY062605">
    <property type="protein sequence ID" value="AAL32683.1"/>
    <property type="molecule type" value="mRNA"/>
</dbReference>
<dbReference type="EMBL" id="AY087758">
    <property type="protein sequence ID" value="AAM65294.1"/>
    <property type="molecule type" value="mRNA"/>
</dbReference>
<dbReference type="EMBL" id="Z17733">
    <property type="protein sequence ID" value="CAA79048.1"/>
    <property type="molecule type" value="mRNA"/>
</dbReference>
<dbReference type="PDB" id="7OUI">
    <property type="method" value="EM"/>
    <property type="resolution" value="2.79 A"/>
    <property type="chains" value="U/u=76-103"/>
</dbReference>
<dbReference type="PDBsum" id="7OUI"/>
<dbReference type="EMDB" id="EMD-13078"/>
<dbReference type="SMR" id="Q39195"/>
<dbReference type="BioGRID" id="6989">
    <property type="interactions" value="4"/>
</dbReference>
<dbReference type="FunCoup" id="Q39195">
    <property type="interactions" value="1131"/>
</dbReference>
<dbReference type="STRING" id="3702.Q39195"/>
<dbReference type="PaxDb" id="3702-AT3G21055.1"/>
<dbReference type="ProteomicsDB" id="248763"/>
<dbReference type="EnsemblPlants" id="AT3G21055.1">
    <property type="protein sequence ID" value="AT3G21055.1"/>
    <property type="gene ID" value="AT3G21055"/>
</dbReference>
<dbReference type="Gramene" id="AT3G21055.1">
    <property type="protein sequence ID" value="AT3G21055.1"/>
    <property type="gene ID" value="AT3G21055"/>
</dbReference>
<dbReference type="KEGG" id="ath:AT3G21055"/>
<dbReference type="Araport" id="AT3G21055"/>
<dbReference type="TAIR" id="AT3G21055">
    <property type="gene designation" value="PSBTN"/>
</dbReference>
<dbReference type="eggNOG" id="ENOG502S9YJ">
    <property type="taxonomic scope" value="Eukaryota"/>
</dbReference>
<dbReference type="HOGENOM" id="CLU_145081_1_0_1"/>
<dbReference type="InParanoid" id="Q39195"/>
<dbReference type="OMA" id="NDNMKEN"/>
<dbReference type="OrthoDB" id="686716at2759"/>
<dbReference type="PhylomeDB" id="Q39195"/>
<dbReference type="BioCyc" id="ARA:AT3G21055-MONOMER"/>
<dbReference type="PRO" id="PR:Q39195"/>
<dbReference type="Proteomes" id="UP000006548">
    <property type="component" value="Chromosome 3"/>
</dbReference>
<dbReference type="ExpressionAtlas" id="Q39195">
    <property type="expression patterns" value="baseline and differential"/>
</dbReference>
<dbReference type="GO" id="GO:0009535">
    <property type="term" value="C:chloroplast thylakoid membrane"/>
    <property type="evidence" value="ECO:0007669"/>
    <property type="project" value="UniProtKB-SubCell"/>
</dbReference>
<dbReference type="GO" id="GO:0005829">
    <property type="term" value="C:cytosol"/>
    <property type="evidence" value="ECO:0007005"/>
    <property type="project" value="TAIR"/>
</dbReference>
<dbReference type="GO" id="GO:0009523">
    <property type="term" value="C:photosystem II"/>
    <property type="evidence" value="ECO:0007669"/>
    <property type="project" value="UniProtKB-KW"/>
</dbReference>
<dbReference type="GO" id="GO:0015979">
    <property type="term" value="P:photosynthesis"/>
    <property type="evidence" value="ECO:0007669"/>
    <property type="project" value="UniProtKB-KW"/>
</dbReference>
<dbReference type="InterPro" id="IPR040296">
    <property type="entry name" value="PSBT"/>
</dbReference>
<dbReference type="PANTHER" id="PTHR34940">
    <property type="entry name" value="PHOTOSYSTEM II 5 KDA PROTEIN, CHLOROPLASTIC"/>
    <property type="match status" value="1"/>
</dbReference>
<dbReference type="PANTHER" id="PTHR34940:SF5">
    <property type="entry name" value="PHOTOSYSTEM II 5 KDA PROTEIN, CHLOROPLASTIC"/>
    <property type="match status" value="1"/>
</dbReference>
<keyword id="KW-0002">3D-structure</keyword>
<keyword id="KW-0150">Chloroplast</keyword>
<keyword id="KW-0472">Membrane</keyword>
<keyword id="KW-0602">Photosynthesis</keyword>
<keyword id="KW-0604">Photosystem II</keyword>
<keyword id="KW-0934">Plastid</keyword>
<keyword id="KW-1185">Reference proteome</keyword>
<keyword id="KW-0793">Thylakoid</keyword>
<keyword id="KW-0809">Transit peptide</keyword>
<protein>
    <recommendedName>
        <fullName>Photosystem II 5 kDa protein, chloroplastic</fullName>
        <shortName>PSII-T</shortName>
    </recommendedName>
    <alternativeName>
        <fullName>Nuclear encoded psbT</fullName>
    </alternativeName>
    <alternativeName>
        <fullName>PsbTn</fullName>
    </alternativeName>
</protein>
<proteinExistence type="evidence at protein level"/>
<evidence type="ECO:0000250" key="1"/>
<evidence type="ECO:0000305" key="2"/>
<evidence type="ECO:0007829" key="3">
    <source>
        <dbReference type="PDB" id="7OUI"/>
    </source>
</evidence>